<accession>P40515</accession>
<accession>D6VVL9</accession>
<protein>
    <recommendedName>
        <fullName>Mitochondrial fission 1 protein</fullName>
    </recommendedName>
    <alternativeName>
        <fullName>Mitochondrial division protein 2</fullName>
    </alternativeName>
</protein>
<gene>
    <name type="primary">FIS1</name>
    <name type="synonym">MDV2</name>
    <name type="ordered locus">YIL065C</name>
</gene>
<sequence>MTKVDFWPTLKDAYEPLYPQQLEILRQQVVSEGGPTATIQSRFNYAWGLIKSTDVNDERLGVKILTDIYKEAESRRRECLYYLTIGCYKLGEYSMAKRYVDTLFEHERNNKQVGALKSMVEDKIQKETLKGVVVAGGVLAGAVAVASFFLRNKRR</sequence>
<evidence type="ECO:0000250" key="1"/>
<evidence type="ECO:0000255" key="2"/>
<evidence type="ECO:0000269" key="3">
    <source>
    </source>
</evidence>
<evidence type="ECO:0000269" key="4">
    <source>
    </source>
</evidence>
<evidence type="ECO:0000269" key="5">
    <source>
    </source>
</evidence>
<evidence type="ECO:0000269" key="6">
    <source>
    </source>
</evidence>
<evidence type="ECO:0000269" key="7">
    <source>
    </source>
</evidence>
<evidence type="ECO:0000269" key="8">
    <source>
    </source>
</evidence>
<evidence type="ECO:0000269" key="9">
    <source>
    </source>
</evidence>
<evidence type="ECO:0000269" key="10">
    <source>
    </source>
</evidence>
<evidence type="ECO:0000269" key="11">
    <source>
    </source>
</evidence>
<evidence type="ECO:0000305" key="12"/>
<evidence type="ECO:0007829" key="13">
    <source>
        <dbReference type="PDB" id="1Y8M"/>
    </source>
</evidence>
<evidence type="ECO:0007829" key="14">
    <source>
        <dbReference type="PDB" id="3O48"/>
    </source>
</evidence>
<proteinExistence type="evidence at protein level"/>
<comment type="function">
    <text evidence="3 4 5 7 11">Has a role in mitochondrial fission. Has a role in outer membrane fission but not matrix separation. Required for targeting MDV1 to the mitochondria. Regulates the assembly of DNM1 into punctate structures, in the mitochondrial tubules, promoting mitochondrial membrane constriction and/or division.</text>
</comment>
<comment type="subunit">
    <text evidence="5 8">Interacts with DNM1 and MDV1.</text>
</comment>
<comment type="interaction">
    <interactant intactId="EBI-25059">
        <id>P40515</id>
    </interactant>
    <interactant intactId="EBI-26394">
        <id>P36130</id>
        <label>CAF4</label>
    </interactant>
    <organismsDiffer>false</organismsDiffer>
    <experiments>4</experiments>
</comment>
<comment type="interaction">
    <interactant intactId="EBI-25059">
        <id>P40515</id>
    </interactant>
    <interactant intactId="EBI-26032">
        <id>P47025</id>
        <label>MDV1</label>
    </interactant>
    <organismsDiffer>false</organismsDiffer>
    <experiments>5</experiments>
</comment>
<comment type="interaction">
    <interactant intactId="EBI-25059">
        <id>P40515</id>
    </interactant>
    <interactant intactId="EBI-31784">
        <id>Q12118</id>
        <label>SGT2</label>
    </interactant>
    <organismsDiffer>false</organismsDiffer>
    <experiments>3</experiments>
</comment>
<comment type="subcellular location">
    <subcellularLocation>
        <location evidence="4 6 10">Mitochondrion outer membrane</location>
        <topology evidence="4 6 10">Single-pass membrane protein</topology>
    </subcellularLocation>
</comment>
<comment type="domain">
    <text evidence="1">The C-terminus is required for mitochondrial localization, while the N-terminus is necessary for mitochondrial fission.</text>
</comment>
<comment type="miscellaneous">
    <text evidence="9">Present with 2410 molecules/cell in log phase SD medium.</text>
</comment>
<comment type="similarity">
    <text evidence="12">Belongs to the FIS1 family.</text>
</comment>
<reference key="1">
    <citation type="journal article" date="2000" name="J. Cell Biol.">
        <title>Dnm1p GTPase-mediated mitochondrial fission is a multi-step process requiring the novel integral membrane component Fis1p.</title>
        <authorList>
            <person name="Mozdy A.D."/>
            <person name="McCaffery J.M."/>
            <person name="Shaw J.M."/>
        </authorList>
    </citation>
    <scope>NUCLEOTIDE SEQUENCE [GENOMIC DNA]</scope>
    <scope>FUNCTION</scope>
    <scope>SUBCELLULAR LOCATION</scope>
</reference>
<reference key="2">
    <citation type="journal article" date="1997" name="Nature">
        <title>The nucleotide sequence of Saccharomyces cerevisiae chromosome IX.</title>
        <authorList>
            <person name="Churcher C.M."/>
            <person name="Bowman S."/>
            <person name="Badcock K."/>
            <person name="Bankier A.T."/>
            <person name="Brown D."/>
            <person name="Chillingworth T."/>
            <person name="Connor R."/>
            <person name="Devlin K."/>
            <person name="Gentles S."/>
            <person name="Hamlin N."/>
            <person name="Harris D.E."/>
            <person name="Horsnell T."/>
            <person name="Hunt S."/>
            <person name="Jagels K."/>
            <person name="Jones M."/>
            <person name="Lye G."/>
            <person name="Moule S."/>
            <person name="Odell C."/>
            <person name="Pearson D."/>
            <person name="Rajandream M.A."/>
            <person name="Rice P."/>
            <person name="Rowley N."/>
            <person name="Skelton J."/>
            <person name="Smith V."/>
            <person name="Walsh S.V."/>
            <person name="Whitehead S."/>
            <person name="Barrell B.G."/>
        </authorList>
    </citation>
    <scope>NUCLEOTIDE SEQUENCE [LARGE SCALE GENOMIC DNA]</scope>
    <source>
        <strain>ATCC 204508 / S288c</strain>
    </source>
</reference>
<reference key="3">
    <citation type="journal article" date="2014" name="G3 (Bethesda)">
        <title>The reference genome sequence of Saccharomyces cerevisiae: Then and now.</title>
        <authorList>
            <person name="Engel S.R."/>
            <person name="Dietrich F.S."/>
            <person name="Fisk D.G."/>
            <person name="Binkley G."/>
            <person name="Balakrishnan R."/>
            <person name="Costanzo M.C."/>
            <person name="Dwight S.S."/>
            <person name="Hitz B.C."/>
            <person name="Karra K."/>
            <person name="Nash R.S."/>
            <person name="Weng S."/>
            <person name="Wong E.D."/>
            <person name="Lloyd P."/>
            <person name="Skrzypek M.S."/>
            <person name="Miyasato S.R."/>
            <person name="Simison M."/>
            <person name="Cherry J.M."/>
        </authorList>
    </citation>
    <scope>GENOME REANNOTATION</scope>
    <source>
        <strain>ATCC 204508 / S288c</strain>
    </source>
</reference>
<reference key="4">
    <citation type="journal article" date="2007" name="Genome Res.">
        <title>Approaching a complete repository of sequence-verified protein-encoding clones for Saccharomyces cerevisiae.</title>
        <authorList>
            <person name="Hu Y."/>
            <person name="Rolfs A."/>
            <person name="Bhullar B."/>
            <person name="Murthy T.V.S."/>
            <person name="Zhu C."/>
            <person name="Berger M.F."/>
            <person name="Camargo A.A."/>
            <person name="Kelley F."/>
            <person name="McCarron S."/>
            <person name="Jepson D."/>
            <person name="Richardson A."/>
            <person name="Raphael J."/>
            <person name="Moreira D."/>
            <person name="Taycher E."/>
            <person name="Zuo D."/>
            <person name="Mohr S."/>
            <person name="Kane M.F."/>
            <person name="Williamson J."/>
            <person name="Simpson A.J.G."/>
            <person name="Bulyk M.L."/>
            <person name="Harlow E."/>
            <person name="Marsischky G."/>
            <person name="Kolodner R.D."/>
            <person name="LaBaer J."/>
        </authorList>
    </citation>
    <scope>NUCLEOTIDE SEQUENCE [GENOMIC DNA]</scope>
    <source>
        <strain>ATCC 204508 / S288c</strain>
    </source>
</reference>
<reference key="5">
    <citation type="journal article" date="2000" name="J. Cell Biol.">
        <title>Mdv1p is a WD repeat protein that interacts with the dynamin-related GTPase, Dnm1p, to trigger mitochondrial division.</title>
        <authorList>
            <person name="Tieu Q."/>
            <person name="Nunnari J."/>
        </authorList>
    </citation>
    <scope>FUNCTION</scope>
</reference>
<reference key="6">
    <citation type="journal article" date="2002" name="J. Cell Biol.">
        <title>The WD repeat protein, Mdv1p, functions as a molecular adaptor by interacting with Dnm1p and Fis1p during mitochondrial fission.</title>
        <authorList>
            <person name="Tieu Q."/>
            <person name="Okreglak V."/>
            <person name="Naylor K."/>
            <person name="Nunnari J."/>
        </authorList>
    </citation>
    <scope>FUNCTION</scope>
    <scope>INTERACTION WITH MDV1</scope>
    <scope>MUTAGENESIS OF LEU-80</scope>
</reference>
<reference key="7">
    <citation type="journal article" date="2003" name="J. Biol. Chem.">
        <title>Bipartite signals mediate subcellular targeting of tail-anchored membrane proteins in Saccharomyces cerevisiae.</title>
        <authorList>
            <person name="Beilharz T."/>
            <person name="Egan B."/>
            <person name="Silver P.A."/>
            <person name="Hofmann K."/>
            <person name="Lithgow T."/>
        </authorList>
    </citation>
    <scope>SUBCELLULAR LOCATION</scope>
</reference>
<reference key="8">
    <citation type="journal article" date="2003" name="J. Cell Sci.">
        <title>Spatial and temporal dynamics of budding yeast mitochondria lacking the division component Fis1p.</title>
        <authorList>
            <person name="Jakobs S."/>
            <person name="Martini N."/>
            <person name="Schauss A.C."/>
            <person name="Egner A."/>
            <person name="Westermann B."/>
            <person name="Hell S.W."/>
        </authorList>
    </citation>
    <scope>FUNCTION</scope>
</reference>
<reference key="9">
    <citation type="journal article" date="2003" name="Mol. Biol. Cell">
        <title>The WD-repeats of Net2p interact with Dnm1p and Fis1p to regulate division of mitochondria.</title>
        <authorList>
            <person name="Cerveny K.L."/>
            <person name="Jensen R.E."/>
        </authorList>
    </citation>
    <scope>INTERACTION WITH DNM1 AND MDV1</scope>
</reference>
<reference key="10">
    <citation type="journal article" date="2003" name="Nature">
        <title>Global analysis of protein expression in yeast.</title>
        <authorList>
            <person name="Ghaemmaghami S."/>
            <person name="Huh W.-K."/>
            <person name="Bower K."/>
            <person name="Howson R.W."/>
            <person name="Belle A."/>
            <person name="Dephoure N."/>
            <person name="O'Shea E.K."/>
            <person name="Weissman J.S."/>
        </authorList>
    </citation>
    <scope>LEVEL OF PROTEIN EXPRESSION [LARGE SCALE ANALYSIS]</scope>
</reference>
<reference key="11">
    <citation type="journal article" date="2003" name="Proc. Natl. Acad. Sci. U.S.A.">
        <title>The proteome of Saccharomyces cerevisiae mitochondria.</title>
        <authorList>
            <person name="Sickmann A."/>
            <person name="Reinders J."/>
            <person name="Wagner Y."/>
            <person name="Joppich C."/>
            <person name="Zahedi R.P."/>
            <person name="Meyer H.E."/>
            <person name="Schoenfisch B."/>
            <person name="Perschil I."/>
            <person name="Chacinska A."/>
            <person name="Guiard B."/>
            <person name="Rehling P."/>
            <person name="Pfanner N."/>
            <person name="Meisinger C."/>
        </authorList>
    </citation>
    <scope>SUBCELLULAR LOCATION [LARGE SCALE ANALYSIS]</scope>
    <source>
        <strain>ATCC 76625 / YPH499</strain>
    </source>
</reference>
<reference key="12">
    <citation type="journal article" date="2013" name="Proc. Natl. Acad. Sci. U.S.A.">
        <title>Interchangeable adaptors regulate mitochondrial dynamin assembly for membrane scission.</title>
        <authorList>
            <person name="Koirala S."/>
            <person name="Guo Q."/>
            <person name="Kalia R."/>
            <person name="Bui H.T."/>
            <person name="Eckert D.M."/>
            <person name="Frost A."/>
            <person name="Shaw J.M."/>
        </authorList>
    </citation>
    <scope>FUNCTION</scope>
</reference>
<reference key="13">
    <citation type="journal article" date="2005" name="J. Biol. Chem.">
        <title>Novel structure of the N terminus in yeast Fis1 correlates with a specialized function in mitochondrial fission.</title>
        <authorList>
            <person name="Suzuki M."/>
            <person name="Neutzner A."/>
            <person name="Tjandra N."/>
            <person name="Youle R.J."/>
        </authorList>
    </citation>
    <scope>STRUCTURE BY NMR</scope>
</reference>
<name>FIS1_YEAST</name>
<keyword id="KW-0002">3D-structure</keyword>
<keyword id="KW-0053">Apoptosis</keyword>
<keyword id="KW-0472">Membrane</keyword>
<keyword id="KW-0496">Mitochondrion</keyword>
<keyword id="KW-1000">Mitochondrion outer membrane</keyword>
<keyword id="KW-1185">Reference proteome</keyword>
<keyword id="KW-0812">Transmembrane</keyword>
<keyword id="KW-1133">Transmembrane helix</keyword>
<dbReference type="EMBL" id="Z38060">
    <property type="protein sequence ID" value="CAA86158.1"/>
    <property type="molecule type" value="Genomic_DNA"/>
</dbReference>
<dbReference type="EMBL" id="AY557851">
    <property type="protein sequence ID" value="AAS56177.1"/>
    <property type="molecule type" value="Genomic_DNA"/>
</dbReference>
<dbReference type="EMBL" id="BK006942">
    <property type="protein sequence ID" value="DAA08485.1"/>
    <property type="molecule type" value="Genomic_DNA"/>
</dbReference>
<dbReference type="PIR" id="S48414">
    <property type="entry name" value="S48414"/>
</dbReference>
<dbReference type="RefSeq" id="NP_012199.3">
    <property type="nucleotide sequence ID" value="NM_001179415.3"/>
</dbReference>
<dbReference type="PDB" id="1Y8M">
    <property type="method" value="NMR"/>
    <property type="chains" value="A=1-138"/>
</dbReference>
<dbReference type="PDB" id="2PQN">
    <property type="method" value="X-ray"/>
    <property type="resolution" value="2.15 A"/>
    <property type="chains" value="A=1-129"/>
</dbReference>
<dbReference type="PDB" id="2PQR">
    <property type="method" value="X-ray"/>
    <property type="resolution" value="1.88 A"/>
    <property type="chains" value="A/B=1-129"/>
</dbReference>
<dbReference type="PDB" id="3O48">
    <property type="method" value="X-ray"/>
    <property type="resolution" value="1.75 A"/>
    <property type="chains" value="A=1-127"/>
</dbReference>
<dbReference type="PDB" id="3UUX">
    <property type="method" value="X-ray"/>
    <property type="resolution" value="3.90 A"/>
    <property type="chains" value="A/C=1-129"/>
</dbReference>
<dbReference type="PDBsum" id="1Y8M"/>
<dbReference type="PDBsum" id="2PQN"/>
<dbReference type="PDBsum" id="2PQR"/>
<dbReference type="PDBsum" id="3O48"/>
<dbReference type="PDBsum" id="3UUX"/>
<dbReference type="SMR" id="P40515"/>
<dbReference type="BioGRID" id="34927">
    <property type="interactions" value="303"/>
</dbReference>
<dbReference type="DIP" id="DIP-1897N"/>
<dbReference type="FunCoup" id="P40515">
    <property type="interactions" value="804"/>
</dbReference>
<dbReference type="IntAct" id="P40515">
    <property type="interactions" value="8"/>
</dbReference>
<dbReference type="MINT" id="P40515"/>
<dbReference type="STRING" id="4932.YIL065C"/>
<dbReference type="GlyGen" id="P40515">
    <property type="glycosylation" value="1 site"/>
</dbReference>
<dbReference type="iPTMnet" id="P40515"/>
<dbReference type="PaxDb" id="4932-YIL065C"/>
<dbReference type="PeptideAtlas" id="P40515"/>
<dbReference type="EnsemblFungi" id="YIL065C_mRNA">
    <property type="protein sequence ID" value="YIL065C"/>
    <property type="gene ID" value="YIL065C"/>
</dbReference>
<dbReference type="GeneID" id="854745"/>
<dbReference type="KEGG" id="sce:YIL065C"/>
<dbReference type="AGR" id="SGD:S000001327"/>
<dbReference type="SGD" id="S000001327">
    <property type="gene designation" value="FIS1"/>
</dbReference>
<dbReference type="VEuPathDB" id="FungiDB:YIL065C"/>
<dbReference type="eggNOG" id="KOG3364">
    <property type="taxonomic scope" value="Eukaryota"/>
</dbReference>
<dbReference type="GeneTree" id="ENSGT00390000000592"/>
<dbReference type="HOGENOM" id="CLU_104368_2_0_1"/>
<dbReference type="InParanoid" id="P40515"/>
<dbReference type="OMA" id="QFNYAWG"/>
<dbReference type="OrthoDB" id="421154at2759"/>
<dbReference type="BioCyc" id="YEAST:G3O-31333-MONOMER"/>
<dbReference type="Reactome" id="R-SCE-9603798">
    <property type="pathway name" value="Class I peroxisomal membrane protein import"/>
</dbReference>
<dbReference type="BioGRID-ORCS" id="854745">
    <property type="hits" value="8 hits in 10 CRISPR screens"/>
</dbReference>
<dbReference type="EvolutionaryTrace" id="P40515"/>
<dbReference type="PRO" id="PR:P40515"/>
<dbReference type="Proteomes" id="UP000002311">
    <property type="component" value="Chromosome IX"/>
</dbReference>
<dbReference type="RNAct" id="P40515">
    <property type="molecule type" value="protein"/>
</dbReference>
<dbReference type="GO" id="GO:0005741">
    <property type="term" value="C:mitochondrial outer membrane"/>
    <property type="evidence" value="ECO:0000314"/>
    <property type="project" value="SGD"/>
</dbReference>
<dbReference type="GO" id="GO:0005739">
    <property type="term" value="C:mitochondrion"/>
    <property type="evidence" value="ECO:0007005"/>
    <property type="project" value="SGD"/>
</dbReference>
<dbReference type="GO" id="GO:0005778">
    <property type="term" value="C:peroxisomal membrane"/>
    <property type="evidence" value="ECO:0000318"/>
    <property type="project" value="GO_Central"/>
</dbReference>
<dbReference type="GO" id="GO:0005777">
    <property type="term" value="C:peroxisome"/>
    <property type="evidence" value="ECO:0000314"/>
    <property type="project" value="SGD"/>
</dbReference>
<dbReference type="GO" id="GO:0008289">
    <property type="term" value="F:lipid binding"/>
    <property type="evidence" value="ECO:0000318"/>
    <property type="project" value="GO_Central"/>
</dbReference>
<dbReference type="GO" id="GO:0060090">
    <property type="term" value="F:molecular adaptor activity"/>
    <property type="evidence" value="ECO:0000318"/>
    <property type="project" value="GO_Central"/>
</dbReference>
<dbReference type="GO" id="GO:0006915">
    <property type="term" value="P:apoptotic process"/>
    <property type="evidence" value="ECO:0007669"/>
    <property type="project" value="UniProtKB-KW"/>
</dbReference>
<dbReference type="GO" id="GO:0000266">
    <property type="term" value="P:mitochondrial fission"/>
    <property type="evidence" value="ECO:0000315"/>
    <property type="project" value="SGD"/>
</dbReference>
<dbReference type="GO" id="GO:0016559">
    <property type="term" value="P:peroxisome fission"/>
    <property type="evidence" value="ECO:0000316"/>
    <property type="project" value="SGD"/>
</dbReference>
<dbReference type="GO" id="GO:0007031">
    <property type="term" value="P:peroxisome organization"/>
    <property type="evidence" value="ECO:0000315"/>
    <property type="project" value="SGD"/>
</dbReference>
<dbReference type="GO" id="GO:0090141">
    <property type="term" value="P:positive regulation of mitochondrial fission"/>
    <property type="evidence" value="ECO:0000314"/>
    <property type="project" value="UniProtKB"/>
</dbReference>
<dbReference type="CDD" id="cd12212">
    <property type="entry name" value="Fis1"/>
    <property type="match status" value="1"/>
</dbReference>
<dbReference type="FunFam" id="1.25.40.10:FF:000481">
    <property type="entry name" value="Mitochondrial fission 1 protein"/>
    <property type="match status" value="1"/>
</dbReference>
<dbReference type="Gene3D" id="1.25.40.10">
    <property type="entry name" value="Tetratricopeptide repeat domain"/>
    <property type="match status" value="1"/>
</dbReference>
<dbReference type="InterPro" id="IPR016543">
    <property type="entry name" value="Fis1"/>
</dbReference>
<dbReference type="InterPro" id="IPR033745">
    <property type="entry name" value="Fis1_cytosol"/>
</dbReference>
<dbReference type="InterPro" id="IPR028061">
    <property type="entry name" value="Fis1_TPR_C"/>
</dbReference>
<dbReference type="InterPro" id="IPR028058">
    <property type="entry name" value="Fis1_TPR_N"/>
</dbReference>
<dbReference type="InterPro" id="IPR011990">
    <property type="entry name" value="TPR-like_helical_dom_sf"/>
</dbReference>
<dbReference type="PANTHER" id="PTHR13247:SF0">
    <property type="entry name" value="MITOCHONDRIAL FISSION 1 PROTEIN"/>
    <property type="match status" value="1"/>
</dbReference>
<dbReference type="PANTHER" id="PTHR13247">
    <property type="entry name" value="TETRATRICOPEPTIDE REPEAT PROTEIN 11 TPR REPEAT PROTEIN 11"/>
    <property type="match status" value="1"/>
</dbReference>
<dbReference type="Pfam" id="PF14853">
    <property type="entry name" value="Fis1_TPR_C"/>
    <property type="match status" value="1"/>
</dbReference>
<dbReference type="Pfam" id="PF14852">
    <property type="entry name" value="Fis1_TPR_N"/>
    <property type="match status" value="1"/>
</dbReference>
<dbReference type="PIRSF" id="PIRSF008835">
    <property type="entry name" value="TPR_repeat_11_Fis1"/>
    <property type="match status" value="1"/>
</dbReference>
<dbReference type="SUPFAM" id="SSF48452">
    <property type="entry name" value="TPR-like"/>
    <property type="match status" value="1"/>
</dbReference>
<feature type="chain" id="PRO_0000202982" description="Mitochondrial fission 1 protein">
    <location>
        <begin position="1"/>
        <end position="155"/>
    </location>
</feature>
<feature type="topological domain" description="Cytoplasmic" evidence="2">
    <location>
        <begin position="1"/>
        <end position="131"/>
    </location>
</feature>
<feature type="transmembrane region" description="Helical" evidence="2">
    <location>
        <begin position="132"/>
        <end position="149"/>
    </location>
</feature>
<feature type="topological domain" description="Mitochondrial intermembrane" evidence="2">
    <location>
        <begin position="150"/>
        <end position="155"/>
    </location>
</feature>
<feature type="mutagenesis site" description="In fis1-L80P; no interaction with MDV1; mitochondrial fission is blocked; DNM1 assembly at punctate structures normal as in wild-type." evidence="5">
    <original>L</original>
    <variation>P</variation>
    <location>
        <position position="80"/>
    </location>
</feature>
<feature type="helix" evidence="14">
    <location>
        <begin position="12"/>
        <end position="14"/>
    </location>
</feature>
<feature type="helix" evidence="14">
    <location>
        <begin position="19"/>
        <end position="31"/>
    </location>
</feature>
<feature type="helix" evidence="14">
    <location>
        <begin position="34"/>
        <end position="36"/>
    </location>
</feature>
<feature type="helix" evidence="14">
    <location>
        <begin position="39"/>
        <end position="51"/>
    </location>
</feature>
<feature type="strand" evidence="13">
    <location>
        <begin position="52"/>
        <end position="54"/>
    </location>
</feature>
<feature type="helix" evidence="14">
    <location>
        <begin position="55"/>
        <end position="71"/>
    </location>
</feature>
<feature type="helix" evidence="14">
    <location>
        <begin position="73"/>
        <end position="75"/>
    </location>
</feature>
<feature type="helix" evidence="14">
    <location>
        <begin position="76"/>
        <end position="90"/>
    </location>
</feature>
<feature type="helix" evidence="14">
    <location>
        <begin position="93"/>
        <end position="104"/>
    </location>
</feature>
<feature type="helix" evidence="14">
    <location>
        <begin position="111"/>
        <end position="127"/>
    </location>
</feature>
<organism>
    <name type="scientific">Saccharomyces cerevisiae (strain ATCC 204508 / S288c)</name>
    <name type="common">Baker's yeast</name>
    <dbReference type="NCBI Taxonomy" id="559292"/>
    <lineage>
        <taxon>Eukaryota</taxon>
        <taxon>Fungi</taxon>
        <taxon>Dikarya</taxon>
        <taxon>Ascomycota</taxon>
        <taxon>Saccharomycotina</taxon>
        <taxon>Saccharomycetes</taxon>
        <taxon>Saccharomycetales</taxon>
        <taxon>Saccharomycetaceae</taxon>
        <taxon>Saccharomyces</taxon>
    </lineage>
</organism>